<protein>
    <recommendedName>
        <fullName evidence="1">ATP synthase subunit delta</fullName>
    </recommendedName>
    <alternativeName>
        <fullName evidence="1">ATP synthase F(1) sector subunit delta</fullName>
    </alternativeName>
    <alternativeName>
        <fullName evidence="1">F-type ATPase subunit delta</fullName>
        <shortName evidence="1">F-ATPase subunit delta</shortName>
    </alternativeName>
</protein>
<evidence type="ECO:0000255" key="1">
    <source>
        <dbReference type="HAMAP-Rule" id="MF_01416"/>
    </source>
</evidence>
<accession>B2TJZ7</accession>
<sequence length="179" mass="21479">MYEYLDRRYALALYQVAEKKGKVDEYLQDLREICELIENNHEFYEVIKHPQISTKKKKKTFISIFKDKIDEELLSFLLILIEKDRILYLREKLNEMEKIDLERKNTLKGIIKTAIPLLSNEFDNLRDIFQKKYDKNILFETEVDRNLLGGVYVRVGHDVIDDTVKSKIEEMKDLMLKQK</sequence>
<name>ATPD_CLOBB</name>
<keyword id="KW-0066">ATP synthesis</keyword>
<keyword id="KW-1003">Cell membrane</keyword>
<keyword id="KW-0139">CF(1)</keyword>
<keyword id="KW-0375">Hydrogen ion transport</keyword>
<keyword id="KW-0406">Ion transport</keyword>
<keyword id="KW-0472">Membrane</keyword>
<keyword id="KW-0813">Transport</keyword>
<feature type="chain" id="PRO_0000370946" description="ATP synthase subunit delta">
    <location>
        <begin position="1"/>
        <end position="179"/>
    </location>
</feature>
<proteinExistence type="inferred from homology"/>
<gene>
    <name evidence="1" type="primary">atpH</name>
    <name type="ordered locus">CLL_A0495</name>
</gene>
<dbReference type="EMBL" id="CP001056">
    <property type="protein sequence ID" value="ACD22412.1"/>
    <property type="molecule type" value="Genomic_DNA"/>
</dbReference>
<dbReference type="SMR" id="B2TJZ7"/>
<dbReference type="KEGG" id="cbk:CLL_A0495"/>
<dbReference type="PATRIC" id="fig|935198.13.peg.450"/>
<dbReference type="HOGENOM" id="CLU_085114_4_0_9"/>
<dbReference type="Proteomes" id="UP000001195">
    <property type="component" value="Chromosome"/>
</dbReference>
<dbReference type="GO" id="GO:0005886">
    <property type="term" value="C:plasma membrane"/>
    <property type="evidence" value="ECO:0007669"/>
    <property type="project" value="UniProtKB-SubCell"/>
</dbReference>
<dbReference type="GO" id="GO:0045259">
    <property type="term" value="C:proton-transporting ATP synthase complex"/>
    <property type="evidence" value="ECO:0007669"/>
    <property type="project" value="UniProtKB-KW"/>
</dbReference>
<dbReference type="GO" id="GO:0046933">
    <property type="term" value="F:proton-transporting ATP synthase activity, rotational mechanism"/>
    <property type="evidence" value="ECO:0007669"/>
    <property type="project" value="UniProtKB-UniRule"/>
</dbReference>
<dbReference type="Gene3D" id="1.10.520.20">
    <property type="entry name" value="N-terminal domain of the delta subunit of the F1F0-ATP synthase"/>
    <property type="match status" value="1"/>
</dbReference>
<dbReference type="HAMAP" id="MF_01416">
    <property type="entry name" value="ATP_synth_delta_bact"/>
    <property type="match status" value="1"/>
</dbReference>
<dbReference type="InterPro" id="IPR026015">
    <property type="entry name" value="ATP_synth_OSCP/delta_N_sf"/>
</dbReference>
<dbReference type="InterPro" id="IPR020781">
    <property type="entry name" value="ATPase_OSCP/d_CS"/>
</dbReference>
<dbReference type="InterPro" id="IPR000711">
    <property type="entry name" value="ATPase_OSCP/dsu"/>
</dbReference>
<dbReference type="NCBIfam" id="TIGR01145">
    <property type="entry name" value="ATP_synt_delta"/>
    <property type="match status" value="1"/>
</dbReference>
<dbReference type="NCBIfam" id="NF004403">
    <property type="entry name" value="PRK05758.2-4"/>
    <property type="match status" value="1"/>
</dbReference>
<dbReference type="PANTHER" id="PTHR11910">
    <property type="entry name" value="ATP SYNTHASE DELTA CHAIN"/>
    <property type="match status" value="1"/>
</dbReference>
<dbReference type="Pfam" id="PF00213">
    <property type="entry name" value="OSCP"/>
    <property type="match status" value="1"/>
</dbReference>
<dbReference type="PRINTS" id="PR00125">
    <property type="entry name" value="ATPASEDELTA"/>
</dbReference>
<dbReference type="SUPFAM" id="SSF47928">
    <property type="entry name" value="N-terminal domain of the delta subunit of the F1F0-ATP synthase"/>
    <property type="match status" value="1"/>
</dbReference>
<dbReference type="PROSITE" id="PS00389">
    <property type="entry name" value="ATPASE_DELTA"/>
    <property type="match status" value="1"/>
</dbReference>
<reference key="1">
    <citation type="submission" date="2008-04" db="EMBL/GenBank/DDBJ databases">
        <title>Complete sequence of Clostridium botulinum strain Eklund.</title>
        <authorList>
            <person name="Brinkac L.M."/>
            <person name="Brown J.L."/>
            <person name="Bruce D."/>
            <person name="Detter C."/>
            <person name="Munk C."/>
            <person name="Smith L.A."/>
            <person name="Smith T.J."/>
            <person name="Sutton G."/>
            <person name="Brettin T.S."/>
        </authorList>
    </citation>
    <scope>NUCLEOTIDE SEQUENCE [LARGE SCALE GENOMIC DNA]</scope>
    <source>
        <strain>Eklund 17B / Type B</strain>
    </source>
</reference>
<comment type="function">
    <text evidence="1">F(1)F(0) ATP synthase produces ATP from ADP in the presence of a proton or sodium gradient. F-type ATPases consist of two structural domains, F(1) containing the extramembraneous catalytic core and F(0) containing the membrane proton channel, linked together by a central stalk and a peripheral stalk. During catalysis, ATP synthesis in the catalytic domain of F(1) is coupled via a rotary mechanism of the central stalk subunits to proton translocation.</text>
</comment>
<comment type="function">
    <text evidence="1">This protein is part of the stalk that links CF(0) to CF(1). It either transmits conformational changes from CF(0) to CF(1) or is implicated in proton conduction.</text>
</comment>
<comment type="subunit">
    <text evidence="1">F-type ATPases have 2 components, F(1) - the catalytic core - and F(0) - the membrane proton channel. F(1) has five subunits: alpha(3), beta(3), gamma(1), delta(1), epsilon(1). F(0) has three main subunits: a(1), b(2) and c(10-14). The alpha and beta chains form an alternating ring which encloses part of the gamma chain. F(1) is attached to F(0) by a central stalk formed by the gamma and epsilon chains, while a peripheral stalk is formed by the delta and b chains.</text>
</comment>
<comment type="subcellular location">
    <subcellularLocation>
        <location evidence="1">Cell membrane</location>
        <topology evidence="1">Peripheral membrane protein</topology>
    </subcellularLocation>
</comment>
<comment type="similarity">
    <text evidence="1">Belongs to the ATPase delta chain family.</text>
</comment>
<organism>
    <name type="scientific">Clostridium botulinum (strain Eklund 17B / Type B)</name>
    <dbReference type="NCBI Taxonomy" id="935198"/>
    <lineage>
        <taxon>Bacteria</taxon>
        <taxon>Bacillati</taxon>
        <taxon>Bacillota</taxon>
        <taxon>Clostridia</taxon>
        <taxon>Eubacteriales</taxon>
        <taxon>Clostridiaceae</taxon>
        <taxon>Clostridium</taxon>
    </lineage>
</organism>